<keyword id="KW-0997">Cell inner membrane</keyword>
<keyword id="KW-1003">Cell membrane</keyword>
<keyword id="KW-0472">Membrane</keyword>
<keyword id="KW-0520">NAD</keyword>
<keyword id="KW-0874">Quinone</keyword>
<keyword id="KW-1278">Translocase</keyword>
<keyword id="KW-0813">Transport</keyword>
<keyword id="KW-0830">Ubiquinone</keyword>
<accession>B0CLD2</accession>
<gene>
    <name evidence="1" type="primary">nuoD</name>
    <name type="ordered locus">BSUIS_A0844</name>
</gene>
<reference key="1">
    <citation type="submission" date="2007-12" db="EMBL/GenBank/DDBJ databases">
        <title>Brucella suis ATCC 23445 whole genome shotgun sequencing project.</title>
        <authorList>
            <person name="Setubal J.C."/>
            <person name="Bowns C."/>
            <person name="Boyle S."/>
            <person name="Crasta O.R."/>
            <person name="Czar M.J."/>
            <person name="Dharmanolla C."/>
            <person name="Gillespie J.J."/>
            <person name="Kenyon R.W."/>
            <person name="Lu J."/>
            <person name="Mane S."/>
            <person name="Mohapatra S."/>
            <person name="Nagrani S."/>
            <person name="Purkayastha A."/>
            <person name="Rajasimha H.K."/>
            <person name="Shallom J.M."/>
            <person name="Shallom S."/>
            <person name="Shukla M."/>
            <person name="Snyder E.E."/>
            <person name="Sobral B.W."/>
            <person name="Wattam A.R."/>
            <person name="Will R."/>
            <person name="Williams K."/>
            <person name="Yoo H."/>
            <person name="Bruce D."/>
            <person name="Detter C."/>
            <person name="Munk C."/>
            <person name="Brettin T.S."/>
        </authorList>
    </citation>
    <scope>NUCLEOTIDE SEQUENCE [LARGE SCALE GENOMIC DNA]</scope>
    <source>
        <strain>ATCC 23445 / NCTC 10510</strain>
    </source>
</reference>
<organism>
    <name type="scientific">Brucella suis (strain ATCC 23445 / NCTC 10510)</name>
    <dbReference type="NCBI Taxonomy" id="470137"/>
    <lineage>
        <taxon>Bacteria</taxon>
        <taxon>Pseudomonadati</taxon>
        <taxon>Pseudomonadota</taxon>
        <taxon>Alphaproteobacteria</taxon>
        <taxon>Hyphomicrobiales</taxon>
        <taxon>Brucellaceae</taxon>
        <taxon>Brucella/Ochrobactrum group</taxon>
        <taxon>Brucella</taxon>
    </lineage>
</organism>
<name>NUOD_BRUSI</name>
<sequence>MAETQVRNFNINFGPQHPAAHGVLRLVLELDGEVVERVDPHIGLLHRGTEKLMEAKTYLQAVPYLDRLDYVAPMNQEHAYALAVERLLDIEVPKRGQLIRVLYSEIGRILNHLLNVTTQAMDVGALTPPLWGFEEREKLMVFYERACGARMHAAYFRPGGVHQDLPDQLIEDIGKWIDPFFTTLKNLDDLITPNRIFKQRNVDIGVVKLEDAWAWGFSGVMVRGSGAAWDLRKSQPYECYSEMEFDIPVGKNGDCYDRYLIRMEEMRQSARIMRQCVDLLLGKERVGPVSNTDHKIVPPKRGEMKRSMEALIHHFKLYTEGYHVPAGEVYAAVEAPKGEFGVYLVSDGSNKPYRCKLRAPGFAHLQAMDFLCRGHMLADVSAILGSLDIVFGEVDR</sequence>
<feature type="chain" id="PRO_0000357789" description="NADH-quinone oxidoreductase subunit D">
    <location>
        <begin position="1"/>
        <end position="396"/>
    </location>
</feature>
<dbReference type="EC" id="7.1.1.-" evidence="1"/>
<dbReference type="EMBL" id="CP000911">
    <property type="protein sequence ID" value="ABY37912.1"/>
    <property type="molecule type" value="Genomic_DNA"/>
</dbReference>
<dbReference type="RefSeq" id="WP_002963940.1">
    <property type="nucleotide sequence ID" value="NC_010169.1"/>
</dbReference>
<dbReference type="SMR" id="B0CLD2"/>
<dbReference type="KEGG" id="bmt:BSUIS_A0844"/>
<dbReference type="HOGENOM" id="CLU_015134_1_1_5"/>
<dbReference type="Proteomes" id="UP000008545">
    <property type="component" value="Chromosome I"/>
</dbReference>
<dbReference type="GO" id="GO:0005886">
    <property type="term" value="C:plasma membrane"/>
    <property type="evidence" value="ECO:0007669"/>
    <property type="project" value="UniProtKB-SubCell"/>
</dbReference>
<dbReference type="GO" id="GO:0051287">
    <property type="term" value="F:NAD binding"/>
    <property type="evidence" value="ECO:0007669"/>
    <property type="project" value="InterPro"/>
</dbReference>
<dbReference type="GO" id="GO:0050136">
    <property type="term" value="F:NADH:ubiquinone reductase (non-electrogenic) activity"/>
    <property type="evidence" value="ECO:0007669"/>
    <property type="project" value="UniProtKB-UniRule"/>
</dbReference>
<dbReference type="GO" id="GO:0048038">
    <property type="term" value="F:quinone binding"/>
    <property type="evidence" value="ECO:0007669"/>
    <property type="project" value="UniProtKB-KW"/>
</dbReference>
<dbReference type="FunFam" id="1.10.645.10:FF:000005">
    <property type="entry name" value="NADH-quinone oxidoreductase subunit D"/>
    <property type="match status" value="1"/>
</dbReference>
<dbReference type="Gene3D" id="1.10.645.10">
    <property type="entry name" value="Cytochrome-c3 Hydrogenase, chain B"/>
    <property type="match status" value="1"/>
</dbReference>
<dbReference type="HAMAP" id="MF_01358">
    <property type="entry name" value="NDH1_NuoD"/>
    <property type="match status" value="1"/>
</dbReference>
<dbReference type="InterPro" id="IPR001135">
    <property type="entry name" value="NADH_Q_OxRdtase_suD"/>
</dbReference>
<dbReference type="InterPro" id="IPR014029">
    <property type="entry name" value="NADH_UbQ_OxRdtase_49kDa_CS"/>
</dbReference>
<dbReference type="InterPro" id="IPR022885">
    <property type="entry name" value="NDH1_su_D/H"/>
</dbReference>
<dbReference type="InterPro" id="IPR029014">
    <property type="entry name" value="NiFe-Hase_large"/>
</dbReference>
<dbReference type="NCBIfam" id="TIGR01962">
    <property type="entry name" value="NuoD"/>
    <property type="match status" value="1"/>
</dbReference>
<dbReference type="NCBIfam" id="NF004739">
    <property type="entry name" value="PRK06075.1"/>
    <property type="match status" value="1"/>
</dbReference>
<dbReference type="PANTHER" id="PTHR11993:SF10">
    <property type="entry name" value="NADH DEHYDROGENASE [UBIQUINONE] IRON-SULFUR PROTEIN 2, MITOCHONDRIAL"/>
    <property type="match status" value="1"/>
</dbReference>
<dbReference type="PANTHER" id="PTHR11993">
    <property type="entry name" value="NADH-UBIQUINONE OXIDOREDUCTASE 49 KDA SUBUNIT"/>
    <property type="match status" value="1"/>
</dbReference>
<dbReference type="Pfam" id="PF00346">
    <property type="entry name" value="Complex1_49kDa"/>
    <property type="match status" value="1"/>
</dbReference>
<dbReference type="SUPFAM" id="SSF56762">
    <property type="entry name" value="HydB/Nqo4-like"/>
    <property type="match status" value="1"/>
</dbReference>
<dbReference type="PROSITE" id="PS00535">
    <property type="entry name" value="COMPLEX1_49K"/>
    <property type="match status" value="1"/>
</dbReference>
<comment type="function">
    <text evidence="1">NDH-1 shuttles electrons from NADH, via FMN and iron-sulfur (Fe-S) centers, to quinones in the respiratory chain. The immediate electron acceptor for the enzyme in this species is believed to be ubiquinone. Couples the redox reaction to proton translocation (for every two electrons transferred, four hydrogen ions are translocated across the cytoplasmic membrane), and thus conserves the redox energy in a proton gradient.</text>
</comment>
<comment type="catalytic activity">
    <reaction evidence="1">
        <text>a quinone + NADH + 5 H(+)(in) = a quinol + NAD(+) + 4 H(+)(out)</text>
        <dbReference type="Rhea" id="RHEA:57888"/>
        <dbReference type="ChEBI" id="CHEBI:15378"/>
        <dbReference type="ChEBI" id="CHEBI:24646"/>
        <dbReference type="ChEBI" id="CHEBI:57540"/>
        <dbReference type="ChEBI" id="CHEBI:57945"/>
        <dbReference type="ChEBI" id="CHEBI:132124"/>
    </reaction>
</comment>
<comment type="subunit">
    <text evidence="1">NDH-1 is composed of 14 different subunits. Subunits NuoB, C, D, E, F, and G constitute the peripheral sector of the complex.</text>
</comment>
<comment type="subcellular location">
    <subcellularLocation>
        <location evidence="1">Cell inner membrane</location>
        <topology evidence="1">Peripheral membrane protein</topology>
        <orientation evidence="1">Cytoplasmic side</orientation>
    </subcellularLocation>
</comment>
<comment type="similarity">
    <text evidence="1">Belongs to the complex I 49 kDa subunit family.</text>
</comment>
<proteinExistence type="inferred from homology"/>
<protein>
    <recommendedName>
        <fullName evidence="1">NADH-quinone oxidoreductase subunit D</fullName>
        <ecNumber evidence="1">7.1.1.-</ecNumber>
    </recommendedName>
    <alternativeName>
        <fullName evidence="1">NADH dehydrogenase I subunit D</fullName>
    </alternativeName>
    <alternativeName>
        <fullName evidence="1">NDH-1 subunit D</fullName>
    </alternativeName>
</protein>
<evidence type="ECO:0000255" key="1">
    <source>
        <dbReference type="HAMAP-Rule" id="MF_01358"/>
    </source>
</evidence>